<reference key="1">
    <citation type="journal article" date="1999" name="Nature">
        <title>Sequence and analysis of chromosome 2 of the plant Arabidopsis thaliana.</title>
        <authorList>
            <person name="Lin X."/>
            <person name="Kaul S."/>
            <person name="Rounsley S.D."/>
            <person name="Shea T.P."/>
            <person name="Benito M.-I."/>
            <person name="Town C.D."/>
            <person name="Fujii C.Y."/>
            <person name="Mason T.M."/>
            <person name="Bowman C.L."/>
            <person name="Barnstead M.E."/>
            <person name="Feldblyum T.V."/>
            <person name="Buell C.R."/>
            <person name="Ketchum K.A."/>
            <person name="Lee J.J."/>
            <person name="Ronning C.M."/>
            <person name="Koo H.L."/>
            <person name="Moffat K.S."/>
            <person name="Cronin L.A."/>
            <person name="Shen M."/>
            <person name="Pai G."/>
            <person name="Van Aken S."/>
            <person name="Umayam L."/>
            <person name="Tallon L.J."/>
            <person name="Gill J.E."/>
            <person name="Adams M.D."/>
            <person name="Carrera A.J."/>
            <person name="Creasy T.H."/>
            <person name="Goodman H.M."/>
            <person name="Somerville C.R."/>
            <person name="Copenhaver G.P."/>
            <person name="Preuss D."/>
            <person name="Nierman W.C."/>
            <person name="White O."/>
            <person name="Eisen J.A."/>
            <person name="Salzberg S.L."/>
            <person name="Fraser C.M."/>
            <person name="Venter J.C."/>
        </authorList>
    </citation>
    <scope>NUCLEOTIDE SEQUENCE [LARGE SCALE GENOMIC DNA]</scope>
    <source>
        <strain>cv. Columbia</strain>
    </source>
</reference>
<reference key="2">
    <citation type="journal article" date="2017" name="Plant J.">
        <title>Araport11: a complete reannotation of the Arabidopsis thaliana reference genome.</title>
        <authorList>
            <person name="Cheng C.Y."/>
            <person name="Krishnakumar V."/>
            <person name="Chan A.P."/>
            <person name="Thibaud-Nissen F."/>
            <person name="Schobel S."/>
            <person name="Town C.D."/>
        </authorList>
    </citation>
    <scope>GENOME REANNOTATION</scope>
    <source>
        <strain>cv. Columbia</strain>
    </source>
</reference>
<reference key="3">
    <citation type="journal article" date="2002" name="Plant Physiol.">
        <title>Cloning and sequencing of cDNAs for hypothetical genes from chromosome 2 of Arabidopsis.</title>
        <authorList>
            <person name="Xiao Y.-L."/>
            <person name="Malik M."/>
            <person name="Whitelaw C.A."/>
            <person name="Town C.D."/>
        </authorList>
    </citation>
    <scope>NUCLEOTIDE SEQUENCE [LARGE SCALE MRNA]</scope>
</reference>
<reference key="4">
    <citation type="submission" date="2004-06" db="EMBL/GenBank/DDBJ databases">
        <authorList>
            <person name="Underwood B.A."/>
            <person name="Xiao Y.-L."/>
            <person name="Moskal W.A. Jr."/>
            <person name="Monaghan E.L."/>
            <person name="Wang W."/>
            <person name="Redman J.C."/>
            <person name="Wu H.C."/>
            <person name="Utterback T."/>
            <person name="Town C.D."/>
        </authorList>
    </citation>
    <scope>NUCLEOTIDE SEQUENCE [LARGE SCALE MRNA]</scope>
    <source>
        <strain>cv. Columbia</strain>
    </source>
</reference>
<reference key="5">
    <citation type="journal article" date="2011" name="PLoS ONE">
        <title>Arabidopsis ovate family proteins, a novel transcriptional repressor family, control multiple aspects of plant growth and development.</title>
        <authorList>
            <person name="Wang S."/>
            <person name="Chang Y."/>
            <person name="Guo J."/>
            <person name="Zeng Q."/>
            <person name="Ellis B.E."/>
            <person name="Chen J.G."/>
        </authorList>
    </citation>
    <scope>FUNCTION</scope>
    <scope>GENE FAMILY</scope>
</reference>
<keyword id="KW-0539">Nucleus</keyword>
<keyword id="KW-1185">Reference proteome</keyword>
<keyword id="KW-0678">Repressor</keyword>
<keyword id="KW-0804">Transcription</keyword>
<keyword id="KW-0805">Transcription regulation</keyword>
<name>OPF17_ARATH</name>
<sequence>MRVKATLINFKSKLSKSCNRFVSLFRFRVKRPVFIRPLRARHGNVKPRHQHHHSKKPICSCLCFLNSSKNHKMSNAKHRSSSFSVNDDDYSKFMQSPLTPATAKKLFTSPITTPYSSRTRKSLNARDTFEDNAVEDACRSFENYLIHLIVEEGKIDDLMDIEELLFCWKNLKSPVFIELVSRFYGELCRDLFSGE</sequence>
<dbReference type="EMBL" id="AC002338">
    <property type="status" value="NOT_ANNOTATED_CDS"/>
    <property type="molecule type" value="Genomic_DNA"/>
</dbReference>
<dbReference type="EMBL" id="CP002685">
    <property type="protein sequence ID" value="AEC08381.1"/>
    <property type="molecule type" value="Genomic_DNA"/>
</dbReference>
<dbReference type="EMBL" id="AY247804">
    <property type="protein sequence ID" value="AAO89198.1"/>
    <property type="molecule type" value="mRNA"/>
</dbReference>
<dbReference type="EMBL" id="AY649280">
    <property type="protein sequence ID" value="AAT69197.1"/>
    <property type="molecule type" value="mRNA"/>
</dbReference>
<dbReference type="RefSeq" id="NP_850144.2">
    <property type="nucleotide sequence ID" value="NM_179813.3"/>
</dbReference>
<dbReference type="FunCoup" id="Q84RF2">
    <property type="interactions" value="1"/>
</dbReference>
<dbReference type="STRING" id="3702.Q84RF2"/>
<dbReference type="PaxDb" id="3702-AT2G30395.1"/>
<dbReference type="EnsemblPlants" id="AT2G30395.1">
    <property type="protein sequence ID" value="AT2G30395.1"/>
    <property type="gene ID" value="AT2G30395"/>
</dbReference>
<dbReference type="GeneID" id="817590"/>
<dbReference type="Gramene" id="AT2G30395.1">
    <property type="protein sequence ID" value="AT2G30395.1"/>
    <property type="gene ID" value="AT2G30395"/>
</dbReference>
<dbReference type="KEGG" id="ath:AT2G30395"/>
<dbReference type="Araport" id="AT2G30395"/>
<dbReference type="TAIR" id="AT2G30395">
    <property type="gene designation" value="OFP17"/>
</dbReference>
<dbReference type="eggNOG" id="ENOG502RZCU">
    <property type="taxonomic scope" value="Eukaryota"/>
</dbReference>
<dbReference type="HOGENOM" id="CLU_080280_1_0_1"/>
<dbReference type="InParanoid" id="Q84RF2"/>
<dbReference type="OMA" id="HDLVCRF"/>
<dbReference type="OrthoDB" id="1871608at2759"/>
<dbReference type="PhylomeDB" id="Q84RF2"/>
<dbReference type="PRO" id="PR:Q84RF2"/>
<dbReference type="Proteomes" id="UP000006548">
    <property type="component" value="Chromosome 2"/>
</dbReference>
<dbReference type="ExpressionAtlas" id="Q84RF2">
    <property type="expression patterns" value="baseline and differential"/>
</dbReference>
<dbReference type="GO" id="GO:0005634">
    <property type="term" value="C:nucleus"/>
    <property type="evidence" value="ECO:0007669"/>
    <property type="project" value="UniProtKB-SubCell"/>
</dbReference>
<dbReference type="GO" id="GO:0045892">
    <property type="term" value="P:negative regulation of DNA-templated transcription"/>
    <property type="evidence" value="ECO:0000314"/>
    <property type="project" value="TAIR"/>
</dbReference>
<dbReference type="InterPro" id="IPR044686">
    <property type="entry name" value="OFP17"/>
</dbReference>
<dbReference type="InterPro" id="IPR006458">
    <property type="entry name" value="Ovate_C"/>
</dbReference>
<dbReference type="PANTHER" id="PTHR34042">
    <property type="entry name" value="TRANSCRIPTION REPRESSOR OFP17"/>
    <property type="match status" value="1"/>
</dbReference>
<dbReference type="PANTHER" id="PTHR34042:SF1">
    <property type="entry name" value="TRANSCRIPTION REPRESSOR OFP17"/>
    <property type="match status" value="1"/>
</dbReference>
<dbReference type="PROSITE" id="PS51754">
    <property type="entry name" value="OVATE"/>
    <property type="match status" value="1"/>
</dbReference>
<organism>
    <name type="scientific">Arabidopsis thaliana</name>
    <name type="common">Mouse-ear cress</name>
    <dbReference type="NCBI Taxonomy" id="3702"/>
    <lineage>
        <taxon>Eukaryota</taxon>
        <taxon>Viridiplantae</taxon>
        <taxon>Streptophyta</taxon>
        <taxon>Embryophyta</taxon>
        <taxon>Tracheophyta</taxon>
        <taxon>Spermatophyta</taxon>
        <taxon>Magnoliopsida</taxon>
        <taxon>eudicotyledons</taxon>
        <taxon>Gunneridae</taxon>
        <taxon>Pentapetalae</taxon>
        <taxon>rosids</taxon>
        <taxon>malvids</taxon>
        <taxon>Brassicales</taxon>
        <taxon>Brassicaceae</taxon>
        <taxon>Camelineae</taxon>
        <taxon>Arabidopsis</taxon>
    </lineage>
</organism>
<comment type="function">
    <text evidence="3">Transcriptional repressor that may regulate multiple aspects of plant growth and development through the regulation of BEL1-LIKE (BLH) and KNOX TALE (KNAT) homeodomain transcription factors.</text>
</comment>
<comment type="subcellular location">
    <subcellularLocation>
        <location evidence="1">Nucleus</location>
    </subcellularLocation>
</comment>
<comment type="miscellaneous">
    <text evidence="4">Plants over-expressing OFP17 have no visible phenotype.</text>
</comment>
<protein>
    <recommendedName>
        <fullName>Transcription repressor OFP17</fullName>
    </recommendedName>
    <alternativeName>
        <fullName>Ovate family protein 17</fullName>
        <shortName>AtOFP17</shortName>
    </alternativeName>
</protein>
<proteinExistence type="evidence at transcript level"/>
<evidence type="ECO:0000250" key="1"/>
<evidence type="ECO:0000255" key="2">
    <source>
        <dbReference type="PROSITE-ProRule" id="PRU01090"/>
    </source>
</evidence>
<evidence type="ECO:0000269" key="3">
    <source>
    </source>
</evidence>
<evidence type="ECO:0000305" key="4">
    <source>
    </source>
</evidence>
<accession>Q84RF2</accession>
<feature type="chain" id="PRO_0000429686" description="Transcription repressor OFP17">
    <location>
        <begin position="1"/>
        <end position="195"/>
    </location>
</feature>
<feature type="domain" description="OVATE" evidence="2">
    <location>
        <begin position="130"/>
        <end position="190"/>
    </location>
</feature>
<gene>
    <name type="primary">OFP17</name>
    <name type="ordered locus">At2g30395</name>
    <name type="ORF">T9D9.20</name>
</gene>